<sequence>MSALETQALGMIPMVIEQSGRGERSYDIYSRLLKERIVFLIGEVNDQTANLVVAQLLFLESENPDKDISFYINSPGGSVTAGMAIYDTMQFIKPDVSTMCLGFAASMGAFLLAAGAKGKRFSLPNSKIMIHQVLGGARGQATDIEIHARDILRTKDQMNRILAERTGQPLEKVKADTERDYFLTADEAKEYGLVDQVVTQRP</sequence>
<name>CLPP_PARC0</name>
<reference key="1">
    <citation type="submission" date="2006-12" db="EMBL/GenBank/DDBJ databases">
        <title>Complete sequence of Acidovorax avenae subsp. citrulli AAC00-1.</title>
        <authorList>
            <person name="Copeland A."/>
            <person name="Lucas S."/>
            <person name="Lapidus A."/>
            <person name="Barry K."/>
            <person name="Detter J.C."/>
            <person name="Glavina del Rio T."/>
            <person name="Dalin E."/>
            <person name="Tice H."/>
            <person name="Pitluck S."/>
            <person name="Kiss H."/>
            <person name="Brettin T."/>
            <person name="Bruce D."/>
            <person name="Han C."/>
            <person name="Tapia R."/>
            <person name="Gilna P."/>
            <person name="Schmutz J."/>
            <person name="Larimer F."/>
            <person name="Land M."/>
            <person name="Hauser L."/>
            <person name="Kyrpides N."/>
            <person name="Kim E."/>
            <person name="Stahl D."/>
            <person name="Richardson P."/>
        </authorList>
    </citation>
    <scope>NUCLEOTIDE SEQUENCE [LARGE SCALE GENOMIC DNA]</scope>
    <source>
        <strain>AAC00-1</strain>
    </source>
</reference>
<accession>A1TM62</accession>
<dbReference type="EC" id="3.4.21.92" evidence="1"/>
<dbReference type="EMBL" id="CP000512">
    <property type="protein sequence ID" value="ABM32050.1"/>
    <property type="molecule type" value="Genomic_DNA"/>
</dbReference>
<dbReference type="RefSeq" id="WP_011794600.1">
    <property type="nucleotide sequence ID" value="NC_008752.1"/>
</dbReference>
<dbReference type="SMR" id="A1TM62"/>
<dbReference type="STRING" id="397945.Aave_1459"/>
<dbReference type="MEROPS" id="S14.001"/>
<dbReference type="GeneID" id="79791131"/>
<dbReference type="KEGG" id="aav:Aave_1459"/>
<dbReference type="eggNOG" id="COG0740">
    <property type="taxonomic scope" value="Bacteria"/>
</dbReference>
<dbReference type="HOGENOM" id="CLU_058707_3_2_4"/>
<dbReference type="OrthoDB" id="9802800at2"/>
<dbReference type="Proteomes" id="UP000002596">
    <property type="component" value="Chromosome"/>
</dbReference>
<dbReference type="GO" id="GO:0005737">
    <property type="term" value="C:cytoplasm"/>
    <property type="evidence" value="ECO:0007669"/>
    <property type="project" value="UniProtKB-SubCell"/>
</dbReference>
<dbReference type="GO" id="GO:0009368">
    <property type="term" value="C:endopeptidase Clp complex"/>
    <property type="evidence" value="ECO:0007669"/>
    <property type="project" value="TreeGrafter"/>
</dbReference>
<dbReference type="GO" id="GO:0004176">
    <property type="term" value="F:ATP-dependent peptidase activity"/>
    <property type="evidence" value="ECO:0007669"/>
    <property type="project" value="InterPro"/>
</dbReference>
<dbReference type="GO" id="GO:0051117">
    <property type="term" value="F:ATPase binding"/>
    <property type="evidence" value="ECO:0007669"/>
    <property type="project" value="TreeGrafter"/>
</dbReference>
<dbReference type="GO" id="GO:0004252">
    <property type="term" value="F:serine-type endopeptidase activity"/>
    <property type="evidence" value="ECO:0007669"/>
    <property type="project" value="UniProtKB-UniRule"/>
</dbReference>
<dbReference type="GO" id="GO:0006515">
    <property type="term" value="P:protein quality control for misfolded or incompletely synthesized proteins"/>
    <property type="evidence" value="ECO:0007669"/>
    <property type="project" value="TreeGrafter"/>
</dbReference>
<dbReference type="CDD" id="cd07017">
    <property type="entry name" value="S14_ClpP_2"/>
    <property type="match status" value="1"/>
</dbReference>
<dbReference type="FunFam" id="3.90.226.10:FF:000001">
    <property type="entry name" value="ATP-dependent Clp protease proteolytic subunit"/>
    <property type="match status" value="1"/>
</dbReference>
<dbReference type="Gene3D" id="3.90.226.10">
    <property type="entry name" value="2-enoyl-CoA Hydratase, Chain A, domain 1"/>
    <property type="match status" value="1"/>
</dbReference>
<dbReference type="HAMAP" id="MF_00444">
    <property type="entry name" value="ClpP"/>
    <property type="match status" value="1"/>
</dbReference>
<dbReference type="InterPro" id="IPR001907">
    <property type="entry name" value="ClpP"/>
</dbReference>
<dbReference type="InterPro" id="IPR029045">
    <property type="entry name" value="ClpP/crotonase-like_dom_sf"/>
</dbReference>
<dbReference type="InterPro" id="IPR023562">
    <property type="entry name" value="ClpP/TepA"/>
</dbReference>
<dbReference type="InterPro" id="IPR018215">
    <property type="entry name" value="ClpP_Ser_AS"/>
</dbReference>
<dbReference type="NCBIfam" id="TIGR00493">
    <property type="entry name" value="clpP"/>
    <property type="match status" value="1"/>
</dbReference>
<dbReference type="NCBIfam" id="NF001368">
    <property type="entry name" value="PRK00277.1"/>
    <property type="match status" value="1"/>
</dbReference>
<dbReference type="NCBIfam" id="NF009205">
    <property type="entry name" value="PRK12553.1"/>
    <property type="match status" value="1"/>
</dbReference>
<dbReference type="PANTHER" id="PTHR10381">
    <property type="entry name" value="ATP-DEPENDENT CLP PROTEASE PROTEOLYTIC SUBUNIT"/>
    <property type="match status" value="1"/>
</dbReference>
<dbReference type="PANTHER" id="PTHR10381:SF70">
    <property type="entry name" value="ATP-DEPENDENT CLP PROTEASE PROTEOLYTIC SUBUNIT"/>
    <property type="match status" value="1"/>
</dbReference>
<dbReference type="Pfam" id="PF00574">
    <property type="entry name" value="CLP_protease"/>
    <property type="match status" value="1"/>
</dbReference>
<dbReference type="PRINTS" id="PR00127">
    <property type="entry name" value="CLPPROTEASEP"/>
</dbReference>
<dbReference type="SUPFAM" id="SSF52096">
    <property type="entry name" value="ClpP/crotonase"/>
    <property type="match status" value="1"/>
</dbReference>
<dbReference type="PROSITE" id="PS00381">
    <property type="entry name" value="CLP_PROTEASE_SER"/>
    <property type="match status" value="1"/>
</dbReference>
<protein>
    <recommendedName>
        <fullName evidence="1">ATP-dependent Clp protease proteolytic subunit</fullName>
        <ecNumber evidence="1">3.4.21.92</ecNumber>
    </recommendedName>
    <alternativeName>
        <fullName evidence="1">Endopeptidase Clp</fullName>
    </alternativeName>
</protein>
<feature type="chain" id="PRO_1000026059" description="ATP-dependent Clp protease proteolytic subunit">
    <location>
        <begin position="1"/>
        <end position="202"/>
    </location>
</feature>
<feature type="active site" description="Nucleophile" evidence="1">
    <location>
        <position position="106"/>
    </location>
</feature>
<feature type="active site" evidence="1">
    <location>
        <position position="131"/>
    </location>
</feature>
<evidence type="ECO:0000255" key="1">
    <source>
        <dbReference type="HAMAP-Rule" id="MF_00444"/>
    </source>
</evidence>
<proteinExistence type="inferred from homology"/>
<keyword id="KW-0963">Cytoplasm</keyword>
<keyword id="KW-0378">Hydrolase</keyword>
<keyword id="KW-0645">Protease</keyword>
<keyword id="KW-0720">Serine protease</keyword>
<comment type="function">
    <text evidence="1">Cleaves peptides in various proteins in a process that requires ATP hydrolysis. Has a chymotrypsin-like activity. Plays a major role in the degradation of misfolded proteins.</text>
</comment>
<comment type="catalytic activity">
    <reaction evidence="1">
        <text>Hydrolysis of proteins to small peptides in the presence of ATP and magnesium. alpha-casein is the usual test substrate. In the absence of ATP, only oligopeptides shorter than five residues are hydrolyzed (such as succinyl-Leu-Tyr-|-NHMec, and Leu-Tyr-Leu-|-Tyr-Trp, in which cleavage of the -Tyr-|-Leu- and -Tyr-|-Trp bonds also occurs).</text>
        <dbReference type="EC" id="3.4.21.92"/>
    </reaction>
</comment>
<comment type="subunit">
    <text evidence="1">Fourteen ClpP subunits assemble into 2 heptameric rings which stack back to back to give a disk-like structure with a central cavity, resembling the structure of eukaryotic proteasomes.</text>
</comment>
<comment type="subcellular location">
    <subcellularLocation>
        <location evidence="1">Cytoplasm</location>
    </subcellularLocation>
</comment>
<comment type="similarity">
    <text evidence="1">Belongs to the peptidase S14 family.</text>
</comment>
<gene>
    <name evidence="1" type="primary">clpP</name>
    <name type="ordered locus">Aave_1459</name>
</gene>
<organism>
    <name type="scientific">Paracidovorax citrulli (strain AAC00-1)</name>
    <name type="common">Acidovorax citrulli</name>
    <dbReference type="NCBI Taxonomy" id="397945"/>
    <lineage>
        <taxon>Bacteria</taxon>
        <taxon>Pseudomonadati</taxon>
        <taxon>Pseudomonadota</taxon>
        <taxon>Betaproteobacteria</taxon>
        <taxon>Burkholderiales</taxon>
        <taxon>Comamonadaceae</taxon>
        <taxon>Paracidovorax</taxon>
    </lineage>
</organism>